<sequence>MKMKIQKKEKQLSKLRALNHSPMSDASVNFDYKSPSPFDCSPDQGENIEEAANHCLPHKNLYTTEEEADTLFSRKLTSHNGMEDSGGRGTGVKKKRKKKEPGEQEGTKGSKDREPKPKRKREPKEPKEPRRAKEPKRAKEPKETKQKDGVKKPRKHREASGTKEGKEKRSCTDYGSRTKSKKASREQGPTPVERKKKGKRKNETTVESLELDHSLPNPSLQSPEEPSESADSQKRRSGRQVKRRKYNEDLDFKVVDDDGETIAVLGAGRTSALSASTLAWQAEEPPEDDANIIEKILASKTVQEVHPGEPPFDLELFYVKYRNFSYLHCKWATMEELEKDPRIAQKIKRFRNKQAQMKHIFTEPDEDLFNPDYIEIDRILEVAHTKDAETGEEVTHYLVKWCSLPYEESTWELEEDVDPAKVKEFESLQILPEVKHVERPASDAWQKLETSREYRNSNRLREYQLEGMNWLLFNWYNRKNCILADEMGLGKTIQSIAFLSEIFVRGIHGPFLIIAPLSTITNWEREFRTWTEMNAIVYHGSQISRQMIQQYEMVYRDAQGNPLSGVFKFHVVITTFEMILADCPELKKIHWSCVIIDEAHRLKNRNCKLLEGLKLMALEHKVLLTGTPLQNSVEELFSLLNFLEPSQFPSETAFLEEFGDLKTEEQVKKLQSILKPMMLRRLKDDVEKNLAPKQETIIEVELTNIQKKYYRAILEKNFSFLTKGANQHNMPNLINTMMELRKCCNHPYLINGAEEKILEDFRKAHSSEASDFQLQAMIQAAGKLVLIDKLLPKLIAGGHKVLIFSQMVRCLDILEDYLIQRRYTYERIDGRVRGNLRQAAIDRFCKPDSDRFVFLLCTRAGGLGINLTAADTCIIFDSDWNPQNDLQAQARCHRIGQSKAVKVYRLITRNSYEREMFDKASLKLGLDKAILQDINRKGSTNGVQQLSKMEVEDLLRKGAYGALMDEEDEGSKFCEEDIDQILQRRTHTITIQSEGKGSTFAKASFVASGNRTDISLDDPNFWQKWAKIAELDTEANNEKESLVIDRPRVRKQTKHYNSFEEDELMEFSELDSDSDERPTRSRRLSDRARRYLRAECFRVEKNLLIFGWGRWKDILTHGRFKWPLNEKDMEMICRALLVYCVKHYKGDEKIKSFIWELITPSKDGQVQTLQNHSGLSAPVPRGRKGKKTKNQLLLPELKNADWLATCNPEVVLHDDGYKKHLKQHCNKVLLRVRMLYYLKAEILGEAADKAFEGTPARELDVLLPDIDYVEIPVDWWDAEADKSLLIGVFKHGYERYNAMRADPALCFLEKVGMPDEKSLSAEQGVTDGTSDIPERGNIDKEDSAEDKLDGLQKQTASPSDGSDGIFGEKKDDSQAAQDGSDPDKSPWPVSSALTARLRRLVTIYQRCNRKELCRPEILGPGNQGYWVQEEVFRRTSEMDLINKEAQKRWTRREQADFYRTVSSFGVVYDQEKKAFDWTQFRIISRLDKKSDESLEHYFYSFVAMCRNVCRLPAWKDDGPPDASIYVEPITEERAAKTLYRIELLRKVREQVLMCPQLHERLQLCRPSLYLPVWWECGKHDRDLLIGTAKHGLNRTDYYIMNDPQLSFLDAYRNYAQHKRTDTQAPGSLCCLYQSNSKLYESLTYTPVSRTSESLESEPENLMRMESRDDHLCLPEGGLPDITCENFVSKVQEVISLDHDENLLPESLENMIYGKTGLSQEPHSFQEAPTTNTQSRKNTITISASRNESCQPPGIEAEITSASSLMSSLEAGVAKMNIKNGKHLLVSISKEGEPCCSETGRRPETIGHREAKCLVSPTLDTGHESGFVDLCSLSVYDPKRNFSSDQQLIDLLENKSLESKLILNQSDEEEEENEDETLAIVASATEKPEVLDFPKPTVNIPRGKNLSFHQDEAKKGRLEVVSKTAGPQRVFPPPANQCHCKHIERWAHGLGSEDSEVEKPKAYQPDLYRSKANNSTVEGETAVIPTEPFKLKHELLKEPWKESSEGGKSFSMYAPEGSEPKPEDMDFENKDDYEKDGTCLSQDYPGKYSEEESKSSASGIAGDLGEEAQEVRAPTIAQLLQEKTLYSFSEWPKDRVIINRLDNICHVVLKGKWPCSHQYEPSGALPTPVLSSSAGSRSSLSEPEATEHGFSNGAALAAQIQKESFLAPVFTKDEQKHRRPYEFEVERDAKARSLEEYSATHGRPPIVLNGWHGESAIDLSCSSEGSPGATSPFPVSASTPKIGAISSLQGALGMDLSGILQAGLIHPVTGQIVNGSLRRDDAAMRRRRGRRKHIEGGMDLIFLKEQTLQAGILEVHEDAGQTTLSTTHPEVPGATSSAPEPTAAASSQAEKAVPSKSLLDWLRQQADYSLDVPGFGTSFSDKPKQRRPRCKEPGKLDISSLGGEERVPAVPKEPGLRGFLPESKFNHTLAEPVLRDAGPRRRGRRPRNELLKAPAIVADSPSGMGPLFMNGLIAGMDLVGLQNVRNIPGIPLTGLVGFPAGFATMPTGEEVKNTLSMLPMMLPGMAAVPQMFGVGGLLNTPMATTCTTTASASLASTKSGTSATEKSTEDKLSGHDVNTDALVDDKPGPSPFSDQSEPTITTSSPVAFNPFLIPGVSPGLIYPSMFLSPGMGMALPAMQQARHSEMVGLETQKRKKKKTKGDSPTQEPASVCEKEPGSDQNCTESSATVSPEREHVAQAREEGLKDSNEDTN</sequence>
<reference key="1">
    <citation type="journal article" date="2009" name="PLoS Biol.">
        <title>Lineage-specific biology revealed by a finished genome assembly of the mouse.</title>
        <authorList>
            <person name="Church D.M."/>
            <person name="Goodstadt L."/>
            <person name="Hillier L.W."/>
            <person name="Zody M.C."/>
            <person name="Goldstein S."/>
            <person name="She X."/>
            <person name="Bult C.J."/>
            <person name="Agarwala R."/>
            <person name="Cherry J.L."/>
            <person name="DiCuccio M."/>
            <person name="Hlavina W."/>
            <person name="Kapustin Y."/>
            <person name="Meric P."/>
            <person name="Maglott D."/>
            <person name="Birtle Z."/>
            <person name="Marques A.C."/>
            <person name="Graves T."/>
            <person name="Zhou S."/>
            <person name="Teague B."/>
            <person name="Potamousis K."/>
            <person name="Churas C."/>
            <person name="Place M."/>
            <person name="Herschleb J."/>
            <person name="Runnheim R."/>
            <person name="Forrest D."/>
            <person name="Amos-Landgraf J."/>
            <person name="Schwartz D.C."/>
            <person name="Cheng Z."/>
            <person name="Lindblad-Toh K."/>
            <person name="Eichler E.E."/>
            <person name="Ponting C.P."/>
        </authorList>
    </citation>
    <scope>NUCLEOTIDE SEQUENCE [LARGE SCALE GENOMIC DNA]</scope>
    <source>
        <strain>C57BL/6J</strain>
    </source>
</reference>
<reference key="2">
    <citation type="journal article" date="2004" name="Genome Res.">
        <title>The status, quality, and expansion of the NIH full-length cDNA project: the Mammalian Gene Collection (MGC).</title>
        <authorList>
            <consortium name="The MGC Project Team"/>
        </authorList>
    </citation>
    <scope>NUCLEOTIDE SEQUENCE [LARGE SCALE MRNA] (ISOFORM 1)</scope>
    <source>
        <tissue>Brain</tissue>
    </source>
</reference>
<reference key="3">
    <citation type="journal article" date="2005" name="Science">
        <title>The transcriptional landscape of the mammalian genome.</title>
        <authorList>
            <person name="Carninci P."/>
            <person name="Kasukawa T."/>
            <person name="Katayama S."/>
            <person name="Gough J."/>
            <person name="Frith M.C."/>
            <person name="Maeda N."/>
            <person name="Oyama R."/>
            <person name="Ravasi T."/>
            <person name="Lenhard B."/>
            <person name="Wells C."/>
            <person name="Kodzius R."/>
            <person name="Shimokawa K."/>
            <person name="Bajic V.B."/>
            <person name="Brenner S.E."/>
            <person name="Batalov S."/>
            <person name="Forrest A.R."/>
            <person name="Zavolan M."/>
            <person name="Davis M.J."/>
            <person name="Wilming L.G."/>
            <person name="Aidinis V."/>
            <person name="Allen J.E."/>
            <person name="Ambesi-Impiombato A."/>
            <person name="Apweiler R."/>
            <person name="Aturaliya R.N."/>
            <person name="Bailey T.L."/>
            <person name="Bansal M."/>
            <person name="Baxter L."/>
            <person name="Beisel K.W."/>
            <person name="Bersano T."/>
            <person name="Bono H."/>
            <person name="Chalk A.M."/>
            <person name="Chiu K.P."/>
            <person name="Choudhary V."/>
            <person name="Christoffels A."/>
            <person name="Clutterbuck D.R."/>
            <person name="Crowe M.L."/>
            <person name="Dalla E."/>
            <person name="Dalrymple B.P."/>
            <person name="de Bono B."/>
            <person name="Della Gatta G."/>
            <person name="di Bernardo D."/>
            <person name="Down T."/>
            <person name="Engstrom P."/>
            <person name="Fagiolini M."/>
            <person name="Faulkner G."/>
            <person name="Fletcher C.F."/>
            <person name="Fukushima T."/>
            <person name="Furuno M."/>
            <person name="Futaki S."/>
            <person name="Gariboldi M."/>
            <person name="Georgii-Hemming P."/>
            <person name="Gingeras T.R."/>
            <person name="Gojobori T."/>
            <person name="Green R.E."/>
            <person name="Gustincich S."/>
            <person name="Harbers M."/>
            <person name="Hayashi Y."/>
            <person name="Hensch T.K."/>
            <person name="Hirokawa N."/>
            <person name="Hill D."/>
            <person name="Huminiecki L."/>
            <person name="Iacono M."/>
            <person name="Ikeo K."/>
            <person name="Iwama A."/>
            <person name="Ishikawa T."/>
            <person name="Jakt M."/>
            <person name="Kanapin A."/>
            <person name="Katoh M."/>
            <person name="Kawasawa Y."/>
            <person name="Kelso J."/>
            <person name="Kitamura H."/>
            <person name="Kitano H."/>
            <person name="Kollias G."/>
            <person name="Krishnan S.P."/>
            <person name="Kruger A."/>
            <person name="Kummerfeld S.K."/>
            <person name="Kurochkin I.V."/>
            <person name="Lareau L.F."/>
            <person name="Lazarevic D."/>
            <person name="Lipovich L."/>
            <person name="Liu J."/>
            <person name="Liuni S."/>
            <person name="McWilliam S."/>
            <person name="Madan Babu M."/>
            <person name="Madera M."/>
            <person name="Marchionni L."/>
            <person name="Matsuda H."/>
            <person name="Matsuzawa S."/>
            <person name="Miki H."/>
            <person name="Mignone F."/>
            <person name="Miyake S."/>
            <person name="Morris K."/>
            <person name="Mottagui-Tabar S."/>
            <person name="Mulder N."/>
            <person name="Nakano N."/>
            <person name="Nakauchi H."/>
            <person name="Ng P."/>
            <person name="Nilsson R."/>
            <person name="Nishiguchi S."/>
            <person name="Nishikawa S."/>
            <person name="Nori F."/>
            <person name="Ohara O."/>
            <person name="Okazaki Y."/>
            <person name="Orlando V."/>
            <person name="Pang K.C."/>
            <person name="Pavan W.J."/>
            <person name="Pavesi G."/>
            <person name="Pesole G."/>
            <person name="Petrovsky N."/>
            <person name="Piazza S."/>
            <person name="Reed J."/>
            <person name="Reid J.F."/>
            <person name="Ring B.Z."/>
            <person name="Ringwald M."/>
            <person name="Rost B."/>
            <person name="Ruan Y."/>
            <person name="Salzberg S.L."/>
            <person name="Sandelin A."/>
            <person name="Schneider C."/>
            <person name="Schoenbach C."/>
            <person name="Sekiguchi K."/>
            <person name="Semple C.A."/>
            <person name="Seno S."/>
            <person name="Sessa L."/>
            <person name="Sheng Y."/>
            <person name="Shibata Y."/>
            <person name="Shimada H."/>
            <person name="Shimada K."/>
            <person name="Silva D."/>
            <person name="Sinclair B."/>
            <person name="Sperling S."/>
            <person name="Stupka E."/>
            <person name="Sugiura K."/>
            <person name="Sultana R."/>
            <person name="Takenaka Y."/>
            <person name="Taki K."/>
            <person name="Tammoja K."/>
            <person name="Tan S.L."/>
            <person name="Tang S."/>
            <person name="Taylor M.S."/>
            <person name="Tegner J."/>
            <person name="Teichmann S.A."/>
            <person name="Ueda H.R."/>
            <person name="van Nimwegen E."/>
            <person name="Verardo R."/>
            <person name="Wei C.L."/>
            <person name="Yagi K."/>
            <person name="Yamanishi H."/>
            <person name="Zabarovsky E."/>
            <person name="Zhu S."/>
            <person name="Zimmer A."/>
            <person name="Hide W."/>
            <person name="Bult C."/>
            <person name="Grimmond S.M."/>
            <person name="Teasdale R.D."/>
            <person name="Liu E.T."/>
            <person name="Brusic V."/>
            <person name="Quackenbush J."/>
            <person name="Wahlestedt C."/>
            <person name="Mattick J.S."/>
            <person name="Hume D.A."/>
            <person name="Kai C."/>
            <person name="Sasaki D."/>
            <person name="Tomaru Y."/>
            <person name="Fukuda S."/>
            <person name="Kanamori-Katayama M."/>
            <person name="Suzuki M."/>
            <person name="Aoki J."/>
            <person name="Arakawa T."/>
            <person name="Iida J."/>
            <person name="Imamura K."/>
            <person name="Itoh M."/>
            <person name="Kato T."/>
            <person name="Kawaji H."/>
            <person name="Kawagashira N."/>
            <person name="Kawashima T."/>
            <person name="Kojima M."/>
            <person name="Kondo S."/>
            <person name="Konno H."/>
            <person name="Nakano K."/>
            <person name="Ninomiya N."/>
            <person name="Nishio T."/>
            <person name="Okada M."/>
            <person name="Plessy C."/>
            <person name="Shibata K."/>
            <person name="Shiraki T."/>
            <person name="Suzuki S."/>
            <person name="Tagami M."/>
            <person name="Waki K."/>
            <person name="Watahiki A."/>
            <person name="Okamura-Oho Y."/>
            <person name="Suzuki H."/>
            <person name="Kawai J."/>
            <person name="Hayashizaki Y."/>
        </authorList>
    </citation>
    <scope>NUCLEOTIDE SEQUENCE [LARGE SCALE MRNA] OF 1-1733 (ISOFORM 2)</scope>
    <source>
        <strain>C57BL/6J</strain>
        <tissue>Heart</tissue>
    </source>
</reference>
<reference key="4">
    <citation type="journal article" date="2003" name="DNA Res.">
        <title>Prediction of the coding sequences of mouse homologues of KIAA gene: II. The complete nucleotide sequences of 400 mouse KIAA-homologous cDNAs identified by screening of terminal sequences of cDNA clones randomly sampled from size-fractionated libraries.</title>
        <authorList>
            <person name="Okazaki N."/>
            <person name="Kikuno R."/>
            <person name="Ohara R."/>
            <person name="Inamoto S."/>
            <person name="Aizawa H."/>
            <person name="Yuasa S."/>
            <person name="Nakajima D."/>
            <person name="Nagase T."/>
            <person name="Ohara O."/>
            <person name="Koga H."/>
        </authorList>
    </citation>
    <scope>NUCLEOTIDE SEQUENCE [LARGE SCALE MRNA] OF 1-283 (ISOFORM 1)</scope>
    <source>
        <tissue>Brain</tissue>
    </source>
</reference>
<reference key="5">
    <citation type="journal article" date="2006" name="FEBS Lett.">
        <title>CHD6 is a DNA-dependent ATPase and localizes at nuclear sites of mRNA synthesis.</title>
        <authorList>
            <person name="Lutz T."/>
            <person name="Stoger R."/>
            <person name="Nieto A."/>
        </authorList>
    </citation>
    <scope>TISSUE SPECIFICITY</scope>
</reference>
<reference key="6">
    <citation type="journal article" date="2010" name="Cell">
        <title>A tissue-specific atlas of mouse protein phosphorylation and expression.</title>
        <authorList>
            <person name="Huttlin E.L."/>
            <person name="Jedrychowski M.P."/>
            <person name="Elias J.E."/>
            <person name="Goswami T."/>
            <person name="Rad R."/>
            <person name="Beausoleil S.A."/>
            <person name="Villen J."/>
            <person name="Haas W."/>
            <person name="Sowa M.E."/>
            <person name="Gygi S.P."/>
        </authorList>
    </citation>
    <scope>PHOSPHORYLATION [LARGE SCALE ANALYSIS] AT SER-1865</scope>
    <scope>IDENTIFICATION BY MASS SPECTROMETRY [LARGE SCALE ANALYSIS]</scope>
    <source>
        <tissue>Brain</tissue>
    </source>
</reference>
<reference key="7">
    <citation type="journal article" date="2010" name="Mamm. Genome">
        <title>Deletion of the Chd6 exon 12 affects motor coordination.</title>
        <authorList>
            <person name="Lathrop M.J."/>
            <person name="Chakrabarti L."/>
            <person name="Eng J."/>
            <person name="Rhodes C.H."/>
            <person name="Lutz T."/>
            <person name="Nieto A."/>
            <person name="Liggitt H.D."/>
            <person name="Warner S."/>
            <person name="Fields J."/>
            <person name="Stoger R."/>
            <person name="Fiering S."/>
        </authorList>
    </citation>
    <scope>DISRUPTION PHENOTYPE</scope>
</reference>
<evidence type="ECO:0000250" key="1"/>
<evidence type="ECO:0000250" key="2">
    <source>
        <dbReference type="UniProtKB" id="Q8TD26"/>
    </source>
</evidence>
<evidence type="ECO:0000255" key="3">
    <source>
        <dbReference type="PROSITE-ProRule" id="PRU00053"/>
    </source>
</evidence>
<evidence type="ECO:0000255" key="4">
    <source>
        <dbReference type="PROSITE-ProRule" id="PRU00541"/>
    </source>
</evidence>
<evidence type="ECO:0000255" key="5">
    <source>
        <dbReference type="PROSITE-ProRule" id="PRU00542"/>
    </source>
</evidence>
<evidence type="ECO:0000256" key="6">
    <source>
        <dbReference type="SAM" id="MobiDB-lite"/>
    </source>
</evidence>
<evidence type="ECO:0000269" key="7">
    <source>
    </source>
</evidence>
<evidence type="ECO:0000269" key="8">
    <source>
    </source>
</evidence>
<evidence type="ECO:0000303" key="9">
    <source>
    </source>
</evidence>
<evidence type="ECO:0000305" key="10"/>
<evidence type="ECO:0007744" key="11">
    <source>
    </source>
</evidence>
<name>CHD6_MOUSE</name>
<accession>A3KFM7</accession>
<accession>B9EKA7</accession>
<accession>Q3UQS6</accession>
<accession>Q80TE9</accession>
<organism>
    <name type="scientific">Mus musculus</name>
    <name type="common">Mouse</name>
    <dbReference type="NCBI Taxonomy" id="10090"/>
    <lineage>
        <taxon>Eukaryota</taxon>
        <taxon>Metazoa</taxon>
        <taxon>Chordata</taxon>
        <taxon>Craniata</taxon>
        <taxon>Vertebrata</taxon>
        <taxon>Euteleostomi</taxon>
        <taxon>Mammalia</taxon>
        <taxon>Eutheria</taxon>
        <taxon>Euarchontoglires</taxon>
        <taxon>Glires</taxon>
        <taxon>Rodentia</taxon>
        <taxon>Myomorpha</taxon>
        <taxon>Muroidea</taxon>
        <taxon>Muridae</taxon>
        <taxon>Murinae</taxon>
        <taxon>Mus</taxon>
        <taxon>Mus</taxon>
    </lineage>
</organism>
<comment type="function">
    <text evidence="2">ATP-dependent chromatin-remodeling factor. Regulates transcription by disrupting nucleosomes in a largely non-sliding manner which strongly increases the accessibility of chromatin. Activates transcription of specific genes in response to oxidative stress through interaction with NFE2L2.</text>
</comment>
<comment type="catalytic activity">
    <reaction evidence="2">
        <text>ATP + H2O = ADP + phosphate + H(+)</text>
        <dbReference type="Rhea" id="RHEA:13065"/>
        <dbReference type="ChEBI" id="CHEBI:15377"/>
        <dbReference type="ChEBI" id="CHEBI:15378"/>
        <dbReference type="ChEBI" id="CHEBI:30616"/>
        <dbReference type="ChEBI" id="CHEBI:43474"/>
        <dbReference type="ChEBI" id="CHEBI:456216"/>
    </reaction>
</comment>
<comment type="subunit">
    <text evidence="2">Interacts with NFE2L2; involved in activation of the transcription.</text>
</comment>
<comment type="subcellular location">
    <subcellularLocation>
        <location evidence="2">Nucleus</location>
        <location evidence="2">Nucleoplasm</location>
    </subcellularLocation>
    <text evidence="2">Enriched at sites of mRNA synthesis.</text>
</comment>
<comment type="alternative products">
    <event type="alternative splicing"/>
    <isoform>
        <id>A3KFM7-1</id>
        <name>1</name>
        <sequence type="displayed"/>
    </isoform>
    <isoform>
        <id>A3KFM7-2</id>
        <name>2</name>
        <sequence type="described" ref="VSP_054901"/>
    </isoform>
</comment>
<comment type="tissue specificity">
    <text evidence="7">Widely expressed.</text>
</comment>
<comment type="disruption phenotype">
    <text evidence="8">Mice with targeted deletion of exon 12 lacking part of the Helicase ATP-binding domain are born in normal Mendelian ratios and are viable. They are fertile and exhibit no obvious morphological or histological difference. However, they display a coordination deficiency which is not due to muscle weakness or bradykinesia.</text>
</comment>
<comment type="similarity">
    <text evidence="10">Belongs to the SNF2/RAD54 helicase family.</text>
</comment>
<comment type="sequence caution" evidence="10">
    <conflict type="erroneous initiation">
        <sequence resource="EMBL-CDS" id="BAC65778"/>
    </conflict>
    <text>Extended N-terminus.</text>
</comment>
<comment type="sequence caution" evidence="10">
    <conflict type="miscellaneous discrepancy">
        <sequence resource="EMBL-CDS" id="BAC65778"/>
    </conflict>
    <text>Probable cloning artifact. Spurious priming from an intronic poly-A tract.</text>
</comment>
<dbReference type="EC" id="3.6.4.-" evidence="2"/>
<dbReference type="EMBL" id="AL590430">
    <property type="status" value="NOT_ANNOTATED_CDS"/>
    <property type="molecule type" value="Genomic_DNA"/>
</dbReference>
<dbReference type="EMBL" id="AL591763">
    <property type="status" value="NOT_ANNOTATED_CDS"/>
    <property type="molecule type" value="Genomic_DNA"/>
</dbReference>
<dbReference type="EMBL" id="BC150806">
    <property type="protein sequence ID" value="AAI50807.1"/>
    <property type="molecule type" value="mRNA"/>
</dbReference>
<dbReference type="EMBL" id="AK142177">
    <property type="protein sequence ID" value="BAE24963.1"/>
    <property type="molecule type" value="mRNA"/>
</dbReference>
<dbReference type="EMBL" id="AK122496">
    <property type="protein sequence ID" value="BAC65778.2"/>
    <property type="status" value="ALT_SEQ"/>
    <property type="molecule type" value="mRNA"/>
</dbReference>
<dbReference type="CCDS" id="CCDS17000.1">
    <molecule id="A3KFM7-1"/>
</dbReference>
<dbReference type="RefSeq" id="NP_775544.2">
    <molecule id="A3KFM7-1"/>
    <property type="nucleotide sequence ID" value="NM_173368.3"/>
</dbReference>
<dbReference type="RefSeq" id="XP_011238078.1">
    <molecule id="A3KFM7-2"/>
    <property type="nucleotide sequence ID" value="XM_011239776.4"/>
</dbReference>
<dbReference type="RefSeq" id="XP_017174747.1">
    <molecule id="A3KFM7-1"/>
    <property type="nucleotide sequence ID" value="XM_017319258.3"/>
</dbReference>
<dbReference type="SMR" id="A3KFM7"/>
<dbReference type="BioGRID" id="214679">
    <property type="interactions" value="4"/>
</dbReference>
<dbReference type="FunCoup" id="A3KFM7">
    <property type="interactions" value="4668"/>
</dbReference>
<dbReference type="IntAct" id="A3KFM7">
    <property type="interactions" value="2"/>
</dbReference>
<dbReference type="MINT" id="A3KFM7"/>
<dbReference type="STRING" id="10090.ENSMUSP00000042291"/>
<dbReference type="GlyGen" id="A3KFM7">
    <property type="glycosylation" value="4 sites, 1 O-linked glycan (1 site)"/>
</dbReference>
<dbReference type="iPTMnet" id="A3KFM7"/>
<dbReference type="PhosphoSitePlus" id="A3KFM7"/>
<dbReference type="jPOST" id="A3KFM7"/>
<dbReference type="PaxDb" id="10090-ENSMUSP00000042291"/>
<dbReference type="PeptideAtlas" id="A3KFM7"/>
<dbReference type="ProteomicsDB" id="281209">
    <molecule id="A3KFM7-1"/>
</dbReference>
<dbReference type="ProteomicsDB" id="281210">
    <molecule id="A3KFM7-2"/>
</dbReference>
<dbReference type="Pumba" id="A3KFM7"/>
<dbReference type="Antibodypedia" id="27058">
    <property type="antibodies" value="47 antibodies from 14 providers"/>
</dbReference>
<dbReference type="DNASU" id="71389"/>
<dbReference type="Ensembl" id="ENSMUST00000039782.14">
    <molecule id="A3KFM7-1"/>
    <property type="protein sequence ID" value="ENSMUSP00000042291.8"/>
    <property type="gene ID" value="ENSMUSG00000057133.15"/>
</dbReference>
<dbReference type="GeneID" id="71389"/>
<dbReference type="KEGG" id="mmu:71389"/>
<dbReference type="UCSC" id="uc008nrn.2">
    <molecule id="A3KFM7-1"/>
    <property type="organism name" value="mouse"/>
</dbReference>
<dbReference type="UCSC" id="uc008nrp.2">
    <molecule id="A3KFM7-2"/>
    <property type="organism name" value="mouse"/>
</dbReference>
<dbReference type="AGR" id="MGI:1918639"/>
<dbReference type="CTD" id="84181"/>
<dbReference type="MGI" id="MGI:1918639">
    <property type="gene designation" value="Chd6"/>
</dbReference>
<dbReference type="VEuPathDB" id="HostDB:ENSMUSG00000057133"/>
<dbReference type="eggNOG" id="KOG0384">
    <property type="taxonomic scope" value="Eukaryota"/>
</dbReference>
<dbReference type="GeneTree" id="ENSGT00940000158986"/>
<dbReference type="HOGENOM" id="CLU_000315_5_1_1"/>
<dbReference type="InParanoid" id="A3KFM7"/>
<dbReference type="OMA" id="HMERWTH"/>
<dbReference type="OrthoDB" id="5857104at2759"/>
<dbReference type="PhylomeDB" id="A3KFM7"/>
<dbReference type="TreeFam" id="TF313572"/>
<dbReference type="BioGRID-ORCS" id="71389">
    <property type="hits" value="3 hits in 82 CRISPR screens"/>
</dbReference>
<dbReference type="ChiTaRS" id="Chd6">
    <property type="organism name" value="mouse"/>
</dbReference>
<dbReference type="PRO" id="PR:A3KFM7"/>
<dbReference type="Proteomes" id="UP000000589">
    <property type="component" value="Chromosome 2"/>
</dbReference>
<dbReference type="RNAct" id="A3KFM7">
    <property type="molecule type" value="protein"/>
</dbReference>
<dbReference type="Bgee" id="ENSMUSG00000057133">
    <property type="expression patterns" value="Expressed in substantia nigra and 246 other cell types or tissues"/>
</dbReference>
<dbReference type="ExpressionAtlas" id="A3KFM7">
    <property type="expression patterns" value="baseline and differential"/>
</dbReference>
<dbReference type="GO" id="GO:0005654">
    <property type="term" value="C:nucleoplasm"/>
    <property type="evidence" value="ECO:0000250"/>
    <property type="project" value="UniProtKB"/>
</dbReference>
<dbReference type="GO" id="GO:0005524">
    <property type="term" value="F:ATP binding"/>
    <property type="evidence" value="ECO:0007669"/>
    <property type="project" value="UniProtKB-KW"/>
</dbReference>
<dbReference type="GO" id="GO:0016887">
    <property type="term" value="F:ATP hydrolysis activity"/>
    <property type="evidence" value="ECO:0007669"/>
    <property type="project" value="RHEA"/>
</dbReference>
<dbReference type="GO" id="GO:0008094">
    <property type="term" value="F:ATP-dependent activity, acting on DNA"/>
    <property type="evidence" value="ECO:0000250"/>
    <property type="project" value="UniProtKB"/>
</dbReference>
<dbReference type="GO" id="GO:0003677">
    <property type="term" value="F:DNA binding"/>
    <property type="evidence" value="ECO:0007669"/>
    <property type="project" value="UniProtKB-KW"/>
</dbReference>
<dbReference type="GO" id="GO:0004386">
    <property type="term" value="F:helicase activity"/>
    <property type="evidence" value="ECO:0007669"/>
    <property type="project" value="UniProtKB-KW"/>
</dbReference>
<dbReference type="GO" id="GO:0001221">
    <property type="term" value="F:transcription coregulator binding"/>
    <property type="evidence" value="ECO:0007669"/>
    <property type="project" value="Ensembl"/>
</dbReference>
<dbReference type="GO" id="GO:0045454">
    <property type="term" value="P:cell redox homeostasis"/>
    <property type="evidence" value="ECO:0007669"/>
    <property type="project" value="Ensembl"/>
</dbReference>
<dbReference type="GO" id="GO:0006325">
    <property type="term" value="P:chromatin organization"/>
    <property type="evidence" value="ECO:0007669"/>
    <property type="project" value="UniProtKB-KW"/>
</dbReference>
<dbReference type="GO" id="GO:0045944">
    <property type="term" value="P:positive regulation of transcription by RNA polymerase II"/>
    <property type="evidence" value="ECO:0000250"/>
    <property type="project" value="UniProtKB"/>
</dbReference>
<dbReference type="CDD" id="cd18668">
    <property type="entry name" value="CD1_tandem_CHD5-9_like"/>
    <property type="match status" value="1"/>
</dbReference>
<dbReference type="CDD" id="cd18663">
    <property type="entry name" value="CD2_tandem_CHD5-9_like"/>
    <property type="match status" value="1"/>
</dbReference>
<dbReference type="CDD" id="cd18793">
    <property type="entry name" value="SF2_C_SNF"/>
    <property type="match status" value="1"/>
</dbReference>
<dbReference type="FunFam" id="1.10.10.60:FF:000184">
    <property type="entry name" value="Chromodomain helicase DNA binding protein 6"/>
    <property type="match status" value="1"/>
</dbReference>
<dbReference type="FunFam" id="2.40.50.40:FF:000001">
    <property type="entry name" value="chromodomain-helicase-DNA-binding protein 8 isoform X4"/>
    <property type="match status" value="1"/>
</dbReference>
<dbReference type="FunFam" id="2.40.50.40:FF:000005">
    <property type="entry name" value="chromodomain-helicase-DNA-binding protein 8 isoform X4"/>
    <property type="match status" value="1"/>
</dbReference>
<dbReference type="FunFam" id="3.40.50.10810:FF:000003">
    <property type="entry name" value="chromodomain-helicase-DNA-binding protein 8 isoform X4"/>
    <property type="match status" value="1"/>
</dbReference>
<dbReference type="FunFam" id="3.40.50.300:FF:000015">
    <property type="entry name" value="chromodomain-helicase-DNA-binding protein 9 isoform X1"/>
    <property type="match status" value="1"/>
</dbReference>
<dbReference type="Gene3D" id="2.40.50.40">
    <property type="match status" value="2"/>
</dbReference>
<dbReference type="Gene3D" id="1.10.10.60">
    <property type="entry name" value="Homeodomain-like"/>
    <property type="match status" value="2"/>
</dbReference>
<dbReference type="Gene3D" id="3.40.50.300">
    <property type="entry name" value="P-loop containing nucleotide triphosphate hydrolases"/>
    <property type="match status" value="1"/>
</dbReference>
<dbReference type="Gene3D" id="3.40.50.10810">
    <property type="entry name" value="Tandem AAA-ATPase domain"/>
    <property type="match status" value="1"/>
</dbReference>
<dbReference type="InterPro" id="IPR006576">
    <property type="entry name" value="BRK_domain"/>
</dbReference>
<dbReference type="InterPro" id="IPR051493">
    <property type="entry name" value="CHD"/>
</dbReference>
<dbReference type="InterPro" id="IPR016197">
    <property type="entry name" value="Chromo-like_dom_sf"/>
</dbReference>
<dbReference type="InterPro" id="IPR000953">
    <property type="entry name" value="Chromo/chromo_shadow_dom"/>
</dbReference>
<dbReference type="InterPro" id="IPR023780">
    <property type="entry name" value="Chromo_domain"/>
</dbReference>
<dbReference type="InterPro" id="IPR002464">
    <property type="entry name" value="DNA/RNA_helicase_DEAH_CS"/>
</dbReference>
<dbReference type="InterPro" id="IPR014001">
    <property type="entry name" value="Helicase_ATP-bd"/>
</dbReference>
<dbReference type="InterPro" id="IPR001650">
    <property type="entry name" value="Helicase_C-like"/>
</dbReference>
<dbReference type="InterPro" id="IPR056342">
    <property type="entry name" value="HTH_CHD6-9"/>
</dbReference>
<dbReference type="InterPro" id="IPR027417">
    <property type="entry name" value="P-loop_NTPase"/>
</dbReference>
<dbReference type="InterPro" id="IPR038718">
    <property type="entry name" value="SNF2-like_sf"/>
</dbReference>
<dbReference type="InterPro" id="IPR049730">
    <property type="entry name" value="SNF2/RAD54-like_C"/>
</dbReference>
<dbReference type="InterPro" id="IPR000330">
    <property type="entry name" value="SNF2_N"/>
</dbReference>
<dbReference type="PANTHER" id="PTHR46850">
    <property type="entry name" value="CHROMODOMAIN-HELICASE-DNA-BINDING PROTEIN 9"/>
    <property type="match status" value="1"/>
</dbReference>
<dbReference type="PANTHER" id="PTHR46850:SF1">
    <property type="entry name" value="CHROMODOMAIN-HELICASE-DNA-BINDING PROTEIN 9"/>
    <property type="match status" value="1"/>
</dbReference>
<dbReference type="Pfam" id="PF00385">
    <property type="entry name" value="Chromo"/>
    <property type="match status" value="2"/>
</dbReference>
<dbReference type="Pfam" id="PF00271">
    <property type="entry name" value="Helicase_C"/>
    <property type="match status" value="1"/>
</dbReference>
<dbReference type="Pfam" id="PF23078">
    <property type="entry name" value="HTH_CHD6-9"/>
    <property type="match status" value="1"/>
</dbReference>
<dbReference type="Pfam" id="PF00176">
    <property type="entry name" value="SNF2-rel_dom"/>
    <property type="match status" value="1"/>
</dbReference>
<dbReference type="SMART" id="SM00592">
    <property type="entry name" value="BRK"/>
    <property type="match status" value="1"/>
</dbReference>
<dbReference type="SMART" id="SM00298">
    <property type="entry name" value="CHROMO"/>
    <property type="match status" value="2"/>
</dbReference>
<dbReference type="SMART" id="SM00487">
    <property type="entry name" value="DEXDc"/>
    <property type="match status" value="1"/>
</dbReference>
<dbReference type="SMART" id="SM00490">
    <property type="entry name" value="HELICc"/>
    <property type="match status" value="1"/>
</dbReference>
<dbReference type="SUPFAM" id="SSF54160">
    <property type="entry name" value="Chromo domain-like"/>
    <property type="match status" value="2"/>
</dbReference>
<dbReference type="SUPFAM" id="SSF52540">
    <property type="entry name" value="P-loop containing nucleoside triphosphate hydrolases"/>
    <property type="match status" value="2"/>
</dbReference>
<dbReference type="PROSITE" id="PS50013">
    <property type="entry name" value="CHROMO_2"/>
    <property type="match status" value="1"/>
</dbReference>
<dbReference type="PROSITE" id="PS00690">
    <property type="entry name" value="DEAH_ATP_HELICASE"/>
    <property type="match status" value="1"/>
</dbReference>
<dbReference type="PROSITE" id="PS51192">
    <property type="entry name" value="HELICASE_ATP_BIND_1"/>
    <property type="match status" value="1"/>
</dbReference>
<dbReference type="PROSITE" id="PS51194">
    <property type="entry name" value="HELICASE_CTER"/>
    <property type="match status" value="1"/>
</dbReference>
<feature type="chain" id="PRO_0000429353" description="Chromodomain-helicase-DNA-binding protein 6">
    <location>
        <begin position="1"/>
        <end position="2711"/>
    </location>
</feature>
<feature type="domain" description="Chromo 1" evidence="3">
    <location>
        <begin position="291"/>
        <end position="342"/>
    </location>
</feature>
<feature type="domain" description="Chromo 2" evidence="3">
    <location>
        <begin position="374"/>
        <end position="438"/>
    </location>
</feature>
<feature type="domain" description="Helicase ATP-binding" evidence="4">
    <location>
        <begin position="472"/>
        <end position="646"/>
    </location>
</feature>
<feature type="domain" description="Helicase C-terminal" evidence="5">
    <location>
        <begin position="786"/>
        <end position="955"/>
    </location>
</feature>
<feature type="domain" description="Myb-like">
    <location>
        <begin position="1448"/>
        <end position="1502"/>
    </location>
</feature>
<feature type="region of interest" description="Required for DNA-dependent ATPase activity" evidence="1">
    <location>
        <begin position="1"/>
        <end position="746"/>
    </location>
</feature>
<feature type="region of interest" description="Disordered" evidence="6">
    <location>
        <begin position="1"/>
        <end position="52"/>
    </location>
</feature>
<feature type="region of interest" description="Disordered" evidence="6">
    <location>
        <begin position="66"/>
        <end position="243"/>
    </location>
</feature>
<feature type="region of interest" description="Disordered" evidence="6">
    <location>
        <begin position="1318"/>
        <end position="1389"/>
    </location>
</feature>
<feature type="region of interest" description="Disordered" evidence="6">
    <location>
        <begin position="1951"/>
        <end position="1978"/>
    </location>
</feature>
<feature type="region of interest" description="Disordered" evidence="6">
    <location>
        <begin position="1997"/>
        <end position="2059"/>
    </location>
</feature>
<feature type="region of interest" description="Disordered" evidence="6">
    <location>
        <begin position="2124"/>
        <end position="2147"/>
    </location>
</feature>
<feature type="region of interest" description="Disordered" evidence="6">
    <location>
        <begin position="2321"/>
        <end position="2350"/>
    </location>
</feature>
<feature type="region of interest" description="Disordered" evidence="6">
    <location>
        <begin position="2373"/>
        <end position="2419"/>
    </location>
</feature>
<feature type="region of interest" description="Disordered" evidence="6">
    <location>
        <begin position="2550"/>
        <end position="2602"/>
    </location>
</feature>
<feature type="region of interest" description="Disordered" evidence="6">
    <location>
        <begin position="2641"/>
        <end position="2711"/>
    </location>
</feature>
<feature type="short sequence motif" description="DEAH box">
    <location>
        <begin position="597"/>
        <end position="600"/>
    </location>
</feature>
<feature type="compositionally biased region" description="Basic and acidic residues" evidence="6">
    <location>
        <begin position="1"/>
        <end position="12"/>
    </location>
</feature>
<feature type="compositionally biased region" description="Basic and acidic residues" evidence="6">
    <location>
        <begin position="100"/>
        <end position="115"/>
    </location>
</feature>
<feature type="compositionally biased region" description="Basic and acidic residues" evidence="6">
    <location>
        <begin position="122"/>
        <end position="151"/>
    </location>
</feature>
<feature type="compositionally biased region" description="Basic and acidic residues" evidence="6">
    <location>
        <begin position="158"/>
        <end position="171"/>
    </location>
</feature>
<feature type="compositionally biased region" description="Low complexity" evidence="6">
    <location>
        <begin position="214"/>
        <end position="224"/>
    </location>
</feature>
<feature type="compositionally biased region" description="Polar residues" evidence="6">
    <location>
        <begin position="1320"/>
        <end position="1329"/>
    </location>
</feature>
<feature type="compositionally biased region" description="Basic and acidic residues" evidence="6">
    <location>
        <begin position="1332"/>
        <end position="1350"/>
    </location>
</feature>
<feature type="compositionally biased region" description="Basic and acidic residues" evidence="6">
    <location>
        <begin position="2017"/>
        <end position="2036"/>
    </location>
</feature>
<feature type="compositionally biased region" description="Low complexity" evidence="6">
    <location>
        <begin position="2130"/>
        <end position="2140"/>
    </location>
</feature>
<feature type="compositionally biased region" description="Low complexity" evidence="6">
    <location>
        <begin position="2333"/>
        <end position="2349"/>
    </location>
</feature>
<feature type="compositionally biased region" description="Low complexity" evidence="6">
    <location>
        <begin position="2550"/>
        <end position="2563"/>
    </location>
</feature>
<feature type="compositionally biased region" description="Basic and acidic residues" evidence="6">
    <location>
        <begin position="2565"/>
        <end position="2586"/>
    </location>
</feature>
<feature type="compositionally biased region" description="Polar residues" evidence="6">
    <location>
        <begin position="2591"/>
        <end position="2602"/>
    </location>
</feature>
<feature type="compositionally biased region" description="Polar residues" evidence="6">
    <location>
        <begin position="2677"/>
        <end position="2688"/>
    </location>
</feature>
<feature type="compositionally biased region" description="Basic and acidic residues" evidence="6">
    <location>
        <begin position="2690"/>
        <end position="2711"/>
    </location>
</feature>
<feature type="binding site" evidence="4">
    <location>
        <begin position="485"/>
        <end position="492"/>
    </location>
    <ligand>
        <name>ATP</name>
        <dbReference type="ChEBI" id="CHEBI:30616"/>
    </ligand>
</feature>
<feature type="modified residue" description="Phosphoserine" evidence="11">
    <location>
        <position position="1865"/>
    </location>
</feature>
<feature type="splice variant" id="VSP_054901" description="In isoform 2." evidence="9">
    <location>
        <position position="184"/>
    </location>
</feature>
<feature type="sequence conflict" description="In Ref. 3; BAE24963." evidence="10" ref="3">
    <original>K</original>
    <variation>R</variation>
    <location>
        <position position="756"/>
    </location>
</feature>
<feature type="sequence conflict" description="In Ref. 3; BAE24963." evidence="10" ref="3">
    <original>L</original>
    <variation>H</variation>
    <location>
        <position position="1305"/>
    </location>
</feature>
<feature type="sequence conflict" description="In Ref. 2; AAI50807." evidence="10" ref="2">
    <original>I</original>
    <variation>V</variation>
    <location>
        <position position="1741"/>
    </location>
</feature>
<proteinExistence type="evidence at protein level"/>
<keyword id="KW-0025">Alternative splicing</keyword>
<keyword id="KW-0067">ATP-binding</keyword>
<keyword id="KW-0156">Chromatin regulator</keyword>
<keyword id="KW-0238">DNA-binding</keyword>
<keyword id="KW-0378">Hydrolase</keyword>
<keyword id="KW-0547">Nucleotide-binding</keyword>
<keyword id="KW-0539">Nucleus</keyword>
<keyword id="KW-0597">Phosphoprotein</keyword>
<keyword id="KW-1185">Reference proteome</keyword>
<keyword id="KW-0677">Repeat</keyword>
<keyword id="KW-0804">Transcription</keyword>
<keyword id="KW-0805">Transcription regulation</keyword>
<protein>
    <recommendedName>
        <fullName>Chromodomain-helicase-DNA-binding protein 6</fullName>
        <shortName>CHD-6</shortName>
        <ecNumber evidence="2">3.6.4.-</ecNumber>
    </recommendedName>
    <alternativeName>
        <fullName>ATP-dependent helicase CHD6</fullName>
    </alternativeName>
</protein>
<gene>
    <name type="primary">Chd6</name>
    <name type="synonym">Kiaa1335</name>
</gene>